<dbReference type="EMBL" id="U27127">
    <property type="protein sequence ID" value="AAA85564.1"/>
    <property type="molecule type" value="Genomic_DNA"/>
</dbReference>
<dbReference type="PIR" id="PC4089">
    <property type="entry name" value="PC4089"/>
</dbReference>
<dbReference type="SMR" id="Q48244"/>
<dbReference type="GO" id="GO:0009279">
    <property type="term" value="C:cell outer membrane"/>
    <property type="evidence" value="ECO:0007669"/>
    <property type="project" value="UniProtKB-SubCell"/>
</dbReference>
<dbReference type="Gene3D" id="3.30.160.180">
    <property type="entry name" value="Putative neuraminyllactose-binding hemagglutinin homolog like domain"/>
    <property type="match status" value="1"/>
</dbReference>
<dbReference type="InterPro" id="IPR007876">
    <property type="entry name" value="NeuraminylLac-bd_hemagglutn"/>
</dbReference>
<dbReference type="InterPro" id="IPR038531">
    <property type="entry name" value="NeuraminylLac-bd_hemagglutn_sf"/>
</dbReference>
<dbReference type="Pfam" id="PF05211">
    <property type="entry name" value="NLBH"/>
    <property type="match status" value="1"/>
</dbReference>
<dbReference type="SUPFAM" id="SSF159594">
    <property type="entry name" value="XCC0632-like"/>
    <property type="match status" value="1"/>
</dbReference>
<proteinExistence type="predicted"/>
<organism>
    <name type="scientific">Helicobacter pylori</name>
    <name type="common">Campylobacter pylori</name>
    <dbReference type="NCBI Taxonomy" id="210"/>
    <lineage>
        <taxon>Bacteria</taxon>
        <taxon>Pseudomonadati</taxon>
        <taxon>Campylobacterota</taxon>
        <taxon>Epsilonproteobacteria</taxon>
        <taxon>Campylobacterales</taxon>
        <taxon>Helicobacteraceae</taxon>
        <taxon>Helicobacter</taxon>
    </lineage>
</organism>
<name>HPAA4_HELPX</name>
<gene>
    <name type="primary">hpaA</name>
    <name type="synonym">hnaA</name>
</gene>
<comment type="subcellular location">
    <subcellularLocation>
        <location evidence="2">Cell outer membrane</location>
        <topology evidence="2">Lipid-anchor</topology>
    </subcellularLocation>
</comment>
<sequence length="125" mass="14157">NYHPASEKVQALDEKILLLRPAFQYRDNIAKEYENKFKNQTTLKVEQILQNQGYKVINVDSSDKDDLSFAQKKEGYLAVAMNGEIVLRPDPKRTIQKKSEPGLLFSTGLDKMEGVLIPAGFVKVT</sequence>
<reference key="1">
    <citation type="journal article" date="1995" name="Gene">
        <title>Genetic evidence for host specificity in the adhesin-encoding genes hxaA of Helicobacter acinonyx, hnaA of H. nemestrinae and hpaA of H. pylori.</title>
        <authorList>
            <person name="Evans D.G."/>
            <person name="Lampert H.C."/>
            <person name="Nakano H."/>
            <person name="Eaton K.A."/>
            <person name="Burnens A.P."/>
            <person name="Bronsdon M.A."/>
            <person name="Evans D.J. Jr."/>
        </authorList>
    </citation>
    <scope>NUCLEOTIDE SEQUENCE [GENOMIC DNA]</scope>
    <source>
        <strain>Nemestrinae</strain>
    </source>
</reference>
<evidence type="ECO:0000255" key="1"/>
<evidence type="ECO:0000305" key="2"/>
<protein>
    <recommendedName>
        <fullName>Neuraminyllactose-binding hemagglutinin</fullName>
    </recommendedName>
    <alternativeName>
        <fullName>Adhesin A</fullName>
    </alternativeName>
    <alternativeName>
        <fullName>Flagellar sheath adhesin</fullName>
    </alternativeName>
    <alternativeName>
        <fullName>N-acetylneuraminyllactose-binding fibrillar hemagglutinin receptor-binding subunit</fullName>
        <shortName>NLBH</shortName>
    </alternativeName>
</protein>
<keyword id="KW-0998">Cell outer membrane</keyword>
<keyword id="KW-0449">Lipoprotein</keyword>
<keyword id="KW-0472">Membrane</keyword>
<feature type="chain" id="PRO_0000096163" description="Neuraminyllactose-binding hemagglutinin">
    <location>
        <begin position="1" status="less than"/>
        <end position="125" status="greater than"/>
    </location>
</feature>
<feature type="region of interest" description="N-acetyl-neuraminyl-alpha(2,3)-lactose binding motif" evidence="1">
    <location>
        <begin position="92"/>
        <end position="97"/>
    </location>
</feature>
<feature type="non-terminal residue">
    <location>
        <position position="1"/>
    </location>
</feature>
<feature type="non-terminal residue">
    <location>
        <position position="125"/>
    </location>
</feature>
<accession>Q48244</accession>